<name>CSRA_HALOH</name>
<dbReference type="EMBL" id="CP001098">
    <property type="protein sequence ID" value="ACL70458.1"/>
    <property type="molecule type" value="Genomic_DNA"/>
</dbReference>
<dbReference type="RefSeq" id="WP_015923428.1">
    <property type="nucleotide sequence ID" value="NC_011899.1"/>
</dbReference>
<dbReference type="SMR" id="B8CYT9"/>
<dbReference type="STRING" id="373903.Hore_17090"/>
<dbReference type="KEGG" id="hor:Hore_17090"/>
<dbReference type="eggNOG" id="COG1551">
    <property type="taxonomic scope" value="Bacteria"/>
</dbReference>
<dbReference type="HOGENOM" id="CLU_164837_0_0_9"/>
<dbReference type="OrthoDB" id="9809061at2"/>
<dbReference type="Proteomes" id="UP000000719">
    <property type="component" value="Chromosome"/>
</dbReference>
<dbReference type="GO" id="GO:0005829">
    <property type="term" value="C:cytosol"/>
    <property type="evidence" value="ECO:0007669"/>
    <property type="project" value="TreeGrafter"/>
</dbReference>
<dbReference type="GO" id="GO:0048027">
    <property type="term" value="F:mRNA 5'-UTR binding"/>
    <property type="evidence" value="ECO:0007669"/>
    <property type="project" value="UniProtKB-UniRule"/>
</dbReference>
<dbReference type="GO" id="GO:0044781">
    <property type="term" value="P:bacterial-type flagellum organization"/>
    <property type="evidence" value="ECO:0007669"/>
    <property type="project" value="UniProtKB-KW"/>
</dbReference>
<dbReference type="GO" id="GO:0006402">
    <property type="term" value="P:mRNA catabolic process"/>
    <property type="evidence" value="ECO:0007669"/>
    <property type="project" value="InterPro"/>
</dbReference>
<dbReference type="GO" id="GO:0045947">
    <property type="term" value="P:negative regulation of translational initiation"/>
    <property type="evidence" value="ECO:0007669"/>
    <property type="project" value="UniProtKB-UniRule"/>
</dbReference>
<dbReference type="GO" id="GO:1902208">
    <property type="term" value="P:regulation of bacterial-type flagellum assembly"/>
    <property type="evidence" value="ECO:0007669"/>
    <property type="project" value="UniProtKB-UniRule"/>
</dbReference>
<dbReference type="GO" id="GO:0006109">
    <property type="term" value="P:regulation of carbohydrate metabolic process"/>
    <property type="evidence" value="ECO:0007669"/>
    <property type="project" value="InterPro"/>
</dbReference>
<dbReference type="FunFam" id="2.60.40.4380:FF:000002">
    <property type="entry name" value="Translational regulator CsrA"/>
    <property type="match status" value="1"/>
</dbReference>
<dbReference type="Gene3D" id="2.60.40.4380">
    <property type="entry name" value="Translational regulator CsrA"/>
    <property type="match status" value="1"/>
</dbReference>
<dbReference type="HAMAP" id="MF_00167">
    <property type="entry name" value="CsrA"/>
    <property type="match status" value="1"/>
</dbReference>
<dbReference type="InterPro" id="IPR003751">
    <property type="entry name" value="CsrA"/>
</dbReference>
<dbReference type="InterPro" id="IPR036107">
    <property type="entry name" value="CsrA_sf"/>
</dbReference>
<dbReference type="NCBIfam" id="TIGR00202">
    <property type="entry name" value="csrA"/>
    <property type="match status" value="1"/>
</dbReference>
<dbReference type="NCBIfam" id="NF002469">
    <property type="entry name" value="PRK01712.1"/>
    <property type="match status" value="1"/>
</dbReference>
<dbReference type="PANTHER" id="PTHR34984">
    <property type="entry name" value="CARBON STORAGE REGULATOR"/>
    <property type="match status" value="1"/>
</dbReference>
<dbReference type="PANTHER" id="PTHR34984:SF1">
    <property type="entry name" value="CARBON STORAGE REGULATOR"/>
    <property type="match status" value="1"/>
</dbReference>
<dbReference type="Pfam" id="PF02599">
    <property type="entry name" value="CsrA"/>
    <property type="match status" value="1"/>
</dbReference>
<dbReference type="SUPFAM" id="SSF117130">
    <property type="entry name" value="CsrA-like"/>
    <property type="match status" value="1"/>
</dbReference>
<reference key="1">
    <citation type="journal article" date="2009" name="PLoS ONE">
        <title>Genome analysis of the anaerobic thermohalophilic bacterium Halothermothrix orenii.</title>
        <authorList>
            <person name="Mavromatis K."/>
            <person name="Ivanova N."/>
            <person name="Anderson I."/>
            <person name="Lykidis A."/>
            <person name="Hooper S.D."/>
            <person name="Sun H."/>
            <person name="Kunin V."/>
            <person name="Lapidus A."/>
            <person name="Hugenholtz P."/>
            <person name="Patel B."/>
            <person name="Kyrpides N.C."/>
        </authorList>
    </citation>
    <scope>NUCLEOTIDE SEQUENCE [LARGE SCALE GENOMIC DNA]</scope>
    <source>
        <strain>H 168 / OCM 544 / DSM 9562</strain>
    </source>
</reference>
<gene>
    <name evidence="1" type="primary">csrA</name>
    <name type="ordered locus">Hore_17090</name>
</gene>
<organism>
    <name type="scientific">Halothermothrix orenii (strain H 168 / OCM 544 / DSM 9562)</name>
    <dbReference type="NCBI Taxonomy" id="373903"/>
    <lineage>
        <taxon>Bacteria</taxon>
        <taxon>Bacillati</taxon>
        <taxon>Bacillota</taxon>
        <taxon>Clostridia</taxon>
        <taxon>Halanaerobiales</taxon>
        <taxon>Halothermotrichaceae</taxon>
        <taxon>Halothermothrix</taxon>
    </lineage>
</organism>
<proteinExistence type="inferred from homology"/>
<accession>B8CYT9</accession>
<evidence type="ECO:0000255" key="1">
    <source>
        <dbReference type="HAMAP-Rule" id="MF_00167"/>
    </source>
</evidence>
<keyword id="KW-1005">Bacterial flagellum biogenesis</keyword>
<keyword id="KW-0963">Cytoplasm</keyword>
<keyword id="KW-1185">Reference proteome</keyword>
<keyword id="KW-0678">Repressor</keyword>
<keyword id="KW-0694">RNA-binding</keyword>
<keyword id="KW-0810">Translation regulation</keyword>
<protein>
    <recommendedName>
        <fullName evidence="1">Translational regulator CsrA</fullName>
    </recommendedName>
</protein>
<feature type="chain" id="PRO_1000123629" description="Translational regulator CsrA">
    <location>
        <begin position="1"/>
        <end position="81"/>
    </location>
</feature>
<sequence length="81" mass="9425">MLILTRKKDEAIIIDDKIKVKVVEIDGNKIKLGIEAPDDVTIHREEVLKEILKENKQALKQKRVLNRDYTSRIKEFIAKKG</sequence>
<comment type="function">
    <text evidence="1">A translational regulator that binds mRNA to regulate translation initiation and/or mRNA stability. Usually binds in the 5'-UTR at or near the Shine-Dalgarno sequence preventing ribosome-binding, thus repressing translation. Its main target seems to be the major flagellin gene, while its function is anatagonized by FliW.</text>
</comment>
<comment type="subunit">
    <text evidence="1">Homodimer; the beta-strands of each monomer intercalate to form a hydrophobic core, while the alpha-helices form wings that extend away from the core.</text>
</comment>
<comment type="subcellular location">
    <subcellularLocation>
        <location evidence="1">Cytoplasm</location>
    </subcellularLocation>
</comment>
<comment type="similarity">
    <text evidence="1">Belongs to the CsrA/RsmA family.</text>
</comment>